<feature type="chain" id="PRO_1000101030" description="Large ribosomal subunit protein bL36">
    <location>
        <begin position="1"/>
        <end position="37"/>
    </location>
</feature>
<comment type="similarity">
    <text evidence="1">Belongs to the bacterial ribosomal protein bL36 family.</text>
</comment>
<dbReference type="EMBL" id="CP001089">
    <property type="protein sequence ID" value="ACD95090.1"/>
    <property type="molecule type" value="Genomic_DNA"/>
</dbReference>
<dbReference type="RefSeq" id="WP_012469435.1">
    <property type="nucleotide sequence ID" value="NC_010814.1"/>
</dbReference>
<dbReference type="SMR" id="B3E853"/>
<dbReference type="STRING" id="398767.Glov_1369"/>
<dbReference type="KEGG" id="glo:Glov_1369"/>
<dbReference type="eggNOG" id="COG0257">
    <property type="taxonomic scope" value="Bacteria"/>
</dbReference>
<dbReference type="HOGENOM" id="CLU_135723_6_2_7"/>
<dbReference type="Proteomes" id="UP000002420">
    <property type="component" value="Chromosome"/>
</dbReference>
<dbReference type="GO" id="GO:0005737">
    <property type="term" value="C:cytoplasm"/>
    <property type="evidence" value="ECO:0007669"/>
    <property type="project" value="UniProtKB-ARBA"/>
</dbReference>
<dbReference type="GO" id="GO:1990904">
    <property type="term" value="C:ribonucleoprotein complex"/>
    <property type="evidence" value="ECO:0007669"/>
    <property type="project" value="UniProtKB-KW"/>
</dbReference>
<dbReference type="GO" id="GO:0005840">
    <property type="term" value="C:ribosome"/>
    <property type="evidence" value="ECO:0007669"/>
    <property type="project" value="UniProtKB-KW"/>
</dbReference>
<dbReference type="GO" id="GO:0003735">
    <property type="term" value="F:structural constituent of ribosome"/>
    <property type="evidence" value="ECO:0007669"/>
    <property type="project" value="InterPro"/>
</dbReference>
<dbReference type="GO" id="GO:0006412">
    <property type="term" value="P:translation"/>
    <property type="evidence" value="ECO:0007669"/>
    <property type="project" value="UniProtKB-UniRule"/>
</dbReference>
<dbReference type="HAMAP" id="MF_00251">
    <property type="entry name" value="Ribosomal_bL36"/>
    <property type="match status" value="1"/>
</dbReference>
<dbReference type="InterPro" id="IPR000473">
    <property type="entry name" value="Ribosomal_bL36"/>
</dbReference>
<dbReference type="InterPro" id="IPR035977">
    <property type="entry name" value="Ribosomal_bL36_sp"/>
</dbReference>
<dbReference type="NCBIfam" id="TIGR01022">
    <property type="entry name" value="rpmJ_bact"/>
    <property type="match status" value="1"/>
</dbReference>
<dbReference type="PANTHER" id="PTHR42888">
    <property type="entry name" value="50S RIBOSOMAL PROTEIN L36, CHLOROPLASTIC"/>
    <property type="match status" value="1"/>
</dbReference>
<dbReference type="PANTHER" id="PTHR42888:SF1">
    <property type="entry name" value="LARGE RIBOSOMAL SUBUNIT PROTEIN BL36C"/>
    <property type="match status" value="1"/>
</dbReference>
<dbReference type="Pfam" id="PF00444">
    <property type="entry name" value="Ribosomal_L36"/>
    <property type="match status" value="1"/>
</dbReference>
<dbReference type="SUPFAM" id="SSF57840">
    <property type="entry name" value="Ribosomal protein L36"/>
    <property type="match status" value="1"/>
</dbReference>
<dbReference type="PROSITE" id="PS00828">
    <property type="entry name" value="RIBOSOMAL_L36"/>
    <property type="match status" value="1"/>
</dbReference>
<gene>
    <name evidence="1" type="primary">rpmJ</name>
    <name type="ordered locus">Glov_1369</name>
</gene>
<keyword id="KW-1185">Reference proteome</keyword>
<keyword id="KW-0687">Ribonucleoprotein</keyword>
<keyword id="KW-0689">Ribosomal protein</keyword>
<name>RL36_TRIL1</name>
<sequence>MKVRASVKKICDKCKIIKRKGVVRVICDTPKHSQRQG</sequence>
<accession>B3E853</accession>
<reference key="1">
    <citation type="submission" date="2008-05" db="EMBL/GenBank/DDBJ databases">
        <title>Complete sequence of chromosome of Geobacter lovleyi SZ.</title>
        <authorList>
            <consortium name="US DOE Joint Genome Institute"/>
            <person name="Lucas S."/>
            <person name="Copeland A."/>
            <person name="Lapidus A."/>
            <person name="Glavina del Rio T."/>
            <person name="Dalin E."/>
            <person name="Tice H."/>
            <person name="Bruce D."/>
            <person name="Goodwin L."/>
            <person name="Pitluck S."/>
            <person name="Chertkov O."/>
            <person name="Meincke L."/>
            <person name="Brettin T."/>
            <person name="Detter J.C."/>
            <person name="Han C."/>
            <person name="Tapia R."/>
            <person name="Kuske C.R."/>
            <person name="Schmutz J."/>
            <person name="Larimer F."/>
            <person name="Land M."/>
            <person name="Hauser L."/>
            <person name="Kyrpides N."/>
            <person name="Mikhailova N."/>
            <person name="Sung Y."/>
            <person name="Fletcher K.E."/>
            <person name="Ritalahti K.M."/>
            <person name="Loeffler F.E."/>
            <person name="Richardson P."/>
        </authorList>
    </citation>
    <scope>NUCLEOTIDE SEQUENCE [LARGE SCALE GENOMIC DNA]</scope>
    <source>
        <strain>ATCC BAA-1151 / DSM 17278 / SZ</strain>
    </source>
</reference>
<protein>
    <recommendedName>
        <fullName evidence="1">Large ribosomal subunit protein bL36</fullName>
    </recommendedName>
    <alternativeName>
        <fullName evidence="2">50S ribosomal protein L36</fullName>
    </alternativeName>
</protein>
<organism>
    <name type="scientific">Trichlorobacter lovleyi (strain ATCC BAA-1151 / DSM 17278 / SZ)</name>
    <name type="common">Geobacter lovleyi</name>
    <dbReference type="NCBI Taxonomy" id="398767"/>
    <lineage>
        <taxon>Bacteria</taxon>
        <taxon>Pseudomonadati</taxon>
        <taxon>Thermodesulfobacteriota</taxon>
        <taxon>Desulfuromonadia</taxon>
        <taxon>Geobacterales</taxon>
        <taxon>Geobacteraceae</taxon>
        <taxon>Trichlorobacter</taxon>
    </lineage>
</organism>
<evidence type="ECO:0000255" key="1">
    <source>
        <dbReference type="HAMAP-Rule" id="MF_00251"/>
    </source>
</evidence>
<evidence type="ECO:0000305" key="2"/>
<proteinExistence type="inferred from homology"/>